<feature type="chain" id="PRO_0000239721" description="NADPH-dependent oxidoreductase">
    <location>
        <begin position="1"/>
        <end position="251"/>
    </location>
</feature>
<gene>
    <name type="primary">nfrA</name>
    <name type="ordered locus">SAB0332</name>
</gene>
<organism>
    <name type="scientific">Staphylococcus aureus (strain bovine RF122 / ET3-1)</name>
    <dbReference type="NCBI Taxonomy" id="273036"/>
    <lineage>
        <taxon>Bacteria</taxon>
        <taxon>Bacillati</taxon>
        <taxon>Bacillota</taxon>
        <taxon>Bacilli</taxon>
        <taxon>Bacillales</taxon>
        <taxon>Staphylococcaceae</taxon>
        <taxon>Staphylococcus</taxon>
    </lineage>
</organism>
<reference key="1">
    <citation type="journal article" date="2007" name="PLoS ONE">
        <title>Molecular correlates of host specialization in Staphylococcus aureus.</title>
        <authorList>
            <person name="Herron-Olson L."/>
            <person name="Fitzgerald J.R."/>
            <person name="Musser J.M."/>
            <person name="Kapur V."/>
        </authorList>
    </citation>
    <scope>NUCLEOTIDE SEQUENCE [LARGE SCALE GENOMIC DNA]</scope>
    <source>
        <strain>bovine RF122 / ET3-1</strain>
    </source>
</reference>
<sequence length="251" mass="28623">MSDYVYNLVKKHHSVRKFKNKPLSEDVVKKLVEAGQSASTSSFLQAYSIIGIDDEKIKENLREVSGQPYVVENGYLFIFVIDYYRHHLVDQHAETDMENAYGSTEGLLVGAIDAALVAENIAVTAEDMGYGIVFLGSLRNDVERVREILDLPDYVFPVFGMAVGEPADDENGAAKPRLPFDHVFHHNKYHADKETQYAQMADYDQTISEYYDQRTNGNRKETWSQQIEMFLGNKARLDMLEQLQKSGLIQR</sequence>
<name>NFRA_STAAB</name>
<accession>Q2YVM4</accession>
<protein>
    <recommendedName>
        <fullName>NADPH-dependent oxidoreductase</fullName>
        <ecNumber>1.6.-.-</ecNumber>
    </recommendedName>
</protein>
<keyword id="KW-0285">Flavoprotein</keyword>
<keyword id="KW-0288">FMN</keyword>
<keyword id="KW-0521">NADP</keyword>
<keyword id="KW-0560">Oxidoreductase</keyword>
<evidence type="ECO:0000250" key="1"/>
<evidence type="ECO:0000305" key="2"/>
<dbReference type="EC" id="1.6.-.-"/>
<dbReference type="EMBL" id="AJ938182">
    <property type="protein sequence ID" value="CAI80020.1"/>
    <property type="molecule type" value="Genomic_DNA"/>
</dbReference>
<dbReference type="RefSeq" id="WP_001287095.1">
    <property type="nucleotide sequence ID" value="NC_007622.1"/>
</dbReference>
<dbReference type="SMR" id="Q2YVM4"/>
<dbReference type="KEGG" id="sab:SAB0332"/>
<dbReference type="HOGENOM" id="CLU_070764_0_0_9"/>
<dbReference type="GO" id="GO:0016491">
    <property type="term" value="F:oxidoreductase activity"/>
    <property type="evidence" value="ECO:0007669"/>
    <property type="project" value="UniProtKB-KW"/>
</dbReference>
<dbReference type="CDD" id="cd02146">
    <property type="entry name" value="NfsA-like"/>
    <property type="match status" value="1"/>
</dbReference>
<dbReference type="Gene3D" id="3.40.109.10">
    <property type="entry name" value="NADH Oxidase"/>
    <property type="match status" value="1"/>
</dbReference>
<dbReference type="InterPro" id="IPR016446">
    <property type="entry name" value="Flavin_OxRdtase_Frp"/>
</dbReference>
<dbReference type="InterPro" id="IPR029479">
    <property type="entry name" value="Nitroreductase"/>
</dbReference>
<dbReference type="InterPro" id="IPR000415">
    <property type="entry name" value="Nitroreductase-like"/>
</dbReference>
<dbReference type="NCBIfam" id="NF008033">
    <property type="entry name" value="PRK10765.1"/>
    <property type="match status" value="1"/>
</dbReference>
<dbReference type="PANTHER" id="PTHR43425:SF3">
    <property type="entry name" value="NADPH-DEPENDENT OXIDOREDUCTASE"/>
    <property type="match status" value="1"/>
</dbReference>
<dbReference type="PANTHER" id="PTHR43425">
    <property type="entry name" value="OXYGEN-INSENSITIVE NADPH NITROREDUCTASE"/>
    <property type="match status" value="1"/>
</dbReference>
<dbReference type="Pfam" id="PF00881">
    <property type="entry name" value="Nitroreductase"/>
    <property type="match status" value="1"/>
</dbReference>
<dbReference type="PIRSF" id="PIRSF005426">
    <property type="entry name" value="Frp"/>
    <property type="match status" value="1"/>
</dbReference>
<dbReference type="SUPFAM" id="SSF55469">
    <property type="entry name" value="FMN-dependent nitroreductase-like"/>
    <property type="match status" value="1"/>
</dbReference>
<proteinExistence type="inferred from homology"/>
<comment type="function">
    <text evidence="1">Reduces FMN, organic nitro compounds and disulfide DTNB. Involved in maintenance of the cellular redox state and the disulfide stress response (By similarity).</text>
</comment>
<comment type="cofactor">
    <cofactor evidence="1">
        <name>FMN</name>
        <dbReference type="ChEBI" id="CHEBI:58210"/>
    </cofactor>
</comment>
<comment type="similarity">
    <text evidence="2">Belongs to the flavin oxidoreductase frp family.</text>
</comment>